<comment type="function">
    <text evidence="1">Plays a key role in meiotic progression. Regulates 3 different functions during meiosis: ensures that sufficient numbers of processed DNA double-strand breaks (DSBs) are available for successful homology search by increasing the steady-state numbers of single-stranded DSB ends. Promotes synaptonemal-complex formation independently of its role in homology search. Plays a key role in the male mid-pachytene checkpoint and the female meiotic prophase checkpoint: required for efficient build-up of ATR activity on unsynapsed chromosome regions, a process believed to form the basis of meiotic silencing of unsynapsed chromatin (MSUC) and meiotic prophase quality control in both sexes.</text>
</comment>
<comment type="subunit">
    <text evidence="1">Interacts with HORMAD2. Interacts with IHO1.</text>
</comment>
<comment type="interaction">
    <interactant intactId="EBI-12165207">
        <id>Q86X24</id>
    </interactant>
    <interactant intactId="EBI-10303987">
        <id>Q9UHG0</id>
        <label>DCDC2</label>
    </interactant>
    <organismsDiffer>false</organismsDiffer>
    <experiments>3</experiments>
</comment>
<comment type="interaction">
    <interactant intactId="EBI-12165207">
        <id>Q86X24</id>
    </interactant>
    <interactant intactId="EBI-16439278">
        <id>Q6FHY5</id>
        <label>MEOX2</label>
    </interactant>
    <organismsDiffer>false</organismsDiffer>
    <experiments>3</experiments>
</comment>
<comment type="interaction">
    <interactant intactId="EBI-12165207">
        <id>Q86X24</id>
    </interactant>
    <interactant intactId="EBI-709754">
        <id>Q9HB07</id>
        <label>MYG1</label>
    </interactant>
    <organismsDiffer>false</organismsDiffer>
    <experiments>3</experiments>
</comment>
<comment type="subcellular location">
    <subcellularLocation>
        <location evidence="1">Nucleus</location>
    </subcellularLocation>
    <subcellularLocation>
        <location evidence="1">Chromosome</location>
    </subcellularLocation>
    <text evidence="1">Preferentially localizes to unsynapsed or desynapsed chromosomal regions during the prophase I stage of meiosis. TRIP13 is required for depletion from synapsed chromosomes. The expression of the phosphorylated form at Ser-377 is restricted to unsynapsed chromosomal regions (By similarity).</text>
</comment>
<comment type="alternative products">
    <event type="alternative splicing"/>
    <isoform>
        <id>Q86X24-1</id>
        <name>1</name>
        <name>HORMAD1L</name>
        <sequence type="displayed"/>
    </isoform>
    <isoform>
        <id>Q86X24-2</id>
        <name>2</name>
        <sequence type="described" ref="VSP_024602"/>
    </isoform>
    <isoform>
        <id>Q86X24-3</id>
        <name>3</name>
        <sequence type="described" ref="VSP_024600 VSP_024601"/>
    </isoform>
    <isoform>
        <id>Q86X24-4</id>
        <name>4</name>
        <sequence type="described" ref="VSP_024600 VSP_024601 VSP_024603"/>
    </isoform>
    <isoform>
        <id>Q86X24-5</id>
        <name>5</name>
        <sequence type="described" ref="VSP_024600 VSP_024601 VSP_024602"/>
    </isoform>
</comment>
<comment type="tissue specificity">
    <text evidence="5">Testis-specific. Over-expressed in carcinomas.</text>
</comment>
<comment type="PTM">
    <text evidence="1">Phosphorylated at Ser-377 in a SPO11-dependent manner.</text>
</comment>
<comment type="sequence caution" evidence="11">
    <conflict type="frameshift">
        <sequence resource="EMBL-CDS" id="AAH33014"/>
    </conflict>
</comment>
<feature type="chain" id="PRO_0000284664" description="HORMA domain-containing protein 1">
    <location>
        <begin position="1"/>
        <end position="394"/>
    </location>
</feature>
<feature type="domain" description="HORMA" evidence="2">
    <location>
        <begin position="24"/>
        <end position="226"/>
    </location>
</feature>
<feature type="region of interest" description="Disordered" evidence="3">
    <location>
        <begin position="253"/>
        <end position="394"/>
    </location>
</feature>
<feature type="short sequence motif" description="Nuclear localization signal" evidence="11">
    <location>
        <begin position="383"/>
        <end position="386"/>
    </location>
</feature>
<feature type="compositionally biased region" description="Basic and acidic residues" evidence="3">
    <location>
        <begin position="253"/>
        <end position="282"/>
    </location>
</feature>
<feature type="compositionally biased region" description="Acidic residues" evidence="3">
    <location>
        <begin position="288"/>
        <end position="300"/>
    </location>
</feature>
<feature type="compositionally biased region" description="Polar residues" evidence="3">
    <location>
        <begin position="310"/>
        <end position="324"/>
    </location>
</feature>
<feature type="compositionally biased region" description="Polar residues" evidence="3">
    <location>
        <begin position="343"/>
        <end position="352"/>
    </location>
</feature>
<feature type="compositionally biased region" description="Basic and acidic residues" evidence="3">
    <location>
        <begin position="362"/>
        <end position="374"/>
    </location>
</feature>
<feature type="modified residue" description="Phosphoserine" evidence="1">
    <location>
        <position position="376"/>
    </location>
</feature>
<feature type="splice variant" id="VSP_024600" description="In isoform 3, isoform 4 and isoform 5." evidence="7">
    <location>
        <begin position="1"/>
        <end position="71"/>
    </location>
</feature>
<feature type="splice variant" id="VSP_024601" description="In isoform 3, isoform 4 and isoform 5." evidence="7">
    <original>CPGSTQLVK</original>
    <variation>MRLWNKISR</variation>
    <location>
        <begin position="72"/>
        <end position="80"/>
    </location>
</feature>
<feature type="splice variant" id="VSP_024602" description="In isoform 2 and isoform 5." evidence="6 8 10">
    <location>
        <begin position="94"/>
        <end position="100"/>
    </location>
</feature>
<feature type="splice variant" id="VSP_024603" description="In isoform 4." evidence="7">
    <location>
        <begin position="101"/>
        <end position="109"/>
    </location>
</feature>
<feature type="sequence variant" id="VAR_031801" description="In dbSNP:rs1336900." evidence="4">
    <original>T</original>
    <variation>I</variation>
    <location>
        <position position="267"/>
    </location>
</feature>
<feature type="sequence conflict" description="In Ref. 7; AAH33014." evidence="11" ref="7">
    <original>K</original>
    <variation>E</variation>
    <location>
        <position position="225"/>
    </location>
</feature>
<feature type="sequence conflict" description="In Ref. 1; CAG38536." evidence="11" ref="1">
    <original>E</original>
    <variation>G</variation>
    <location>
        <position position="264"/>
    </location>
</feature>
<feature type="sequence conflict" description="In Ref. 1; CAG38536." evidence="11" ref="1">
    <original>K</original>
    <variation>E</variation>
    <location>
        <position position="305"/>
    </location>
</feature>
<feature type="helix" evidence="13">
    <location>
        <begin position="23"/>
        <end position="44"/>
    </location>
</feature>
<feature type="helix" evidence="13">
    <location>
        <begin position="50"/>
        <end position="52"/>
    </location>
</feature>
<feature type="strand" evidence="13">
    <location>
        <begin position="53"/>
        <end position="60"/>
    </location>
</feature>
<feature type="strand" evidence="13">
    <location>
        <begin position="62"/>
        <end position="66"/>
    </location>
</feature>
<feature type="helix" evidence="13">
    <location>
        <begin position="75"/>
        <end position="90"/>
    </location>
</feature>
<feature type="strand" evidence="13">
    <location>
        <begin position="94"/>
        <end position="103"/>
    </location>
</feature>
<feature type="strand" evidence="13">
    <location>
        <begin position="110"/>
        <end position="121"/>
    </location>
</feature>
<feature type="helix" evidence="13">
    <location>
        <begin position="146"/>
        <end position="161"/>
    </location>
</feature>
<feature type="strand" evidence="13">
    <location>
        <begin position="172"/>
        <end position="179"/>
    </location>
</feature>
<feature type="helix" evidence="13">
    <location>
        <begin position="181"/>
        <end position="183"/>
    </location>
</feature>
<feature type="strand" evidence="13">
    <location>
        <begin position="193"/>
        <end position="195"/>
    </location>
</feature>
<feature type="strand" evidence="13">
    <location>
        <begin position="202"/>
        <end position="205"/>
    </location>
</feature>
<feature type="strand" evidence="13">
    <location>
        <begin position="207"/>
        <end position="216"/>
    </location>
</feature>
<feature type="strand" evidence="13">
    <location>
        <begin position="218"/>
        <end position="229"/>
    </location>
</feature>
<feature type="helix" evidence="13">
    <location>
        <begin position="230"/>
        <end position="232"/>
    </location>
</feature>
<feature type="strand" evidence="13">
    <location>
        <begin position="238"/>
        <end position="241"/>
    </location>
</feature>
<feature type="strand" evidence="13">
    <location>
        <begin position="387"/>
        <end position="390"/>
    </location>
</feature>
<dbReference type="EMBL" id="AY626344">
    <property type="protein sequence ID" value="AAT45740.1"/>
    <property type="molecule type" value="mRNA"/>
</dbReference>
<dbReference type="EMBL" id="AL136755">
    <property type="protein sequence ID" value="CAB66689.1"/>
    <property type="molecule type" value="mRNA"/>
</dbReference>
<dbReference type="EMBL" id="CR533505">
    <property type="protein sequence ID" value="CAG38536.1"/>
    <property type="molecule type" value="mRNA"/>
</dbReference>
<dbReference type="EMBL" id="AK097390">
    <property type="protein sequence ID" value="BAG53463.1"/>
    <property type="molecule type" value="mRNA"/>
</dbReference>
<dbReference type="EMBL" id="AL356292">
    <property type="status" value="NOT_ANNOTATED_CDS"/>
    <property type="molecule type" value="Genomic_DNA"/>
</dbReference>
<dbReference type="EMBL" id="CH471121">
    <property type="protein sequence ID" value="EAW53523.1"/>
    <property type="molecule type" value="Genomic_DNA"/>
</dbReference>
<dbReference type="EMBL" id="BC033014">
    <property type="protein sequence ID" value="AAH33014.1"/>
    <property type="status" value="ALT_FRAME"/>
    <property type="molecule type" value="mRNA"/>
</dbReference>
<dbReference type="EMBL" id="BC047406">
    <property type="protein sequence ID" value="AAH47406.1"/>
    <property type="molecule type" value="mRNA"/>
</dbReference>
<dbReference type="CCDS" id="CCDS55633.1">
    <molecule id="Q86X24-2"/>
</dbReference>
<dbReference type="CCDS" id="CCDS967.1">
    <molecule id="Q86X24-1"/>
</dbReference>
<dbReference type="RefSeq" id="NP_001186758.1">
    <molecule id="Q86X24-2"/>
    <property type="nucleotide sequence ID" value="NM_001199829.2"/>
</dbReference>
<dbReference type="RefSeq" id="NP_115508.2">
    <molecule id="Q86X24-1"/>
    <property type="nucleotide sequence ID" value="NM_032132.4"/>
</dbReference>
<dbReference type="RefSeq" id="XP_006711633.1">
    <property type="nucleotide sequence ID" value="XM_006711570.2"/>
</dbReference>
<dbReference type="RefSeq" id="XP_006711634.1">
    <property type="nucleotide sequence ID" value="XM_006711571.2"/>
</dbReference>
<dbReference type="RefSeq" id="XP_011508355.1">
    <property type="nucleotide sequence ID" value="XM_011510053.2"/>
</dbReference>
<dbReference type="RefSeq" id="XP_047287764.1">
    <molecule id="Q86X24-1"/>
    <property type="nucleotide sequence ID" value="XM_047431808.1"/>
</dbReference>
<dbReference type="RefSeq" id="XP_047287766.1">
    <molecule id="Q86X24-2"/>
    <property type="nucleotide sequence ID" value="XM_047431810.1"/>
</dbReference>
<dbReference type="RefSeq" id="XP_047287787.1">
    <molecule id="Q86X24-3"/>
    <property type="nucleotide sequence ID" value="XM_047431831.1"/>
</dbReference>
<dbReference type="RefSeq" id="XP_047287792.1">
    <molecule id="Q86X24-5"/>
    <property type="nucleotide sequence ID" value="XM_047431836.1"/>
</dbReference>
<dbReference type="PDB" id="8J69">
    <property type="method" value="X-ray"/>
    <property type="resolution" value="2.67 A"/>
    <property type="chains" value="A=1-394"/>
</dbReference>
<dbReference type="PDBsum" id="8J69"/>
<dbReference type="SMR" id="Q86X24"/>
<dbReference type="BioGRID" id="123867">
    <property type="interactions" value="8"/>
</dbReference>
<dbReference type="FunCoup" id="Q86X24">
    <property type="interactions" value="335"/>
</dbReference>
<dbReference type="IntAct" id="Q86X24">
    <property type="interactions" value="4"/>
</dbReference>
<dbReference type="STRING" id="9606.ENSP00000355167"/>
<dbReference type="iPTMnet" id="Q86X24"/>
<dbReference type="PhosphoSitePlus" id="Q86X24"/>
<dbReference type="BioMuta" id="HORMAD1"/>
<dbReference type="DMDM" id="74750516"/>
<dbReference type="jPOST" id="Q86X24"/>
<dbReference type="MassIVE" id="Q86X24"/>
<dbReference type="PaxDb" id="9606-ENSP00000355167"/>
<dbReference type="PeptideAtlas" id="Q86X24"/>
<dbReference type="ProteomicsDB" id="70223">
    <molecule id="Q86X24-1"/>
</dbReference>
<dbReference type="ProteomicsDB" id="70224">
    <molecule id="Q86X24-2"/>
</dbReference>
<dbReference type="ProteomicsDB" id="70225">
    <molecule id="Q86X24-3"/>
</dbReference>
<dbReference type="ProteomicsDB" id="70226">
    <molecule id="Q86X24-4"/>
</dbReference>
<dbReference type="ProteomicsDB" id="70227">
    <molecule id="Q86X24-5"/>
</dbReference>
<dbReference type="Antibodypedia" id="34037">
    <property type="antibodies" value="190 antibodies from 25 providers"/>
</dbReference>
<dbReference type="DNASU" id="84072"/>
<dbReference type="Ensembl" id="ENST00000322343.11">
    <molecule id="Q86X24-2"/>
    <property type="protein sequence ID" value="ENSP00000326489.7"/>
    <property type="gene ID" value="ENSG00000143452.16"/>
</dbReference>
<dbReference type="Ensembl" id="ENST00000361824.7">
    <molecule id="Q86X24-1"/>
    <property type="protein sequence ID" value="ENSP00000355167.2"/>
    <property type="gene ID" value="ENSG00000143452.16"/>
</dbReference>
<dbReference type="Ensembl" id="ENST00000368995.8">
    <molecule id="Q86X24-4"/>
    <property type="protein sequence ID" value="ENSP00000357991.4"/>
    <property type="gene ID" value="ENSG00000143452.16"/>
</dbReference>
<dbReference type="GeneID" id="84072"/>
<dbReference type="KEGG" id="hsa:84072"/>
<dbReference type="MANE-Select" id="ENST00000361824.7">
    <property type="protein sequence ID" value="ENSP00000355167.2"/>
    <property type="RefSeq nucleotide sequence ID" value="NM_032132.5"/>
    <property type="RefSeq protein sequence ID" value="NP_115508.2"/>
</dbReference>
<dbReference type="UCSC" id="uc001evk.3">
    <molecule id="Q86X24-1"/>
    <property type="organism name" value="human"/>
</dbReference>
<dbReference type="AGR" id="HGNC:25245"/>
<dbReference type="CTD" id="84072"/>
<dbReference type="DisGeNET" id="84072"/>
<dbReference type="GeneCards" id="HORMAD1"/>
<dbReference type="HGNC" id="HGNC:25245">
    <property type="gene designation" value="HORMAD1"/>
</dbReference>
<dbReference type="HPA" id="ENSG00000143452">
    <property type="expression patterns" value="Tissue enriched (testis)"/>
</dbReference>
<dbReference type="MalaCards" id="HORMAD1"/>
<dbReference type="MIM" id="609824">
    <property type="type" value="gene"/>
</dbReference>
<dbReference type="neXtProt" id="NX_Q86X24"/>
<dbReference type="OpenTargets" id="ENSG00000143452"/>
<dbReference type="PharmGKB" id="PA134930374"/>
<dbReference type="VEuPathDB" id="HostDB:ENSG00000143452"/>
<dbReference type="eggNOG" id="KOG4652">
    <property type="taxonomic scope" value="Eukaryota"/>
</dbReference>
<dbReference type="GeneTree" id="ENSGT00390000018130"/>
<dbReference type="HOGENOM" id="CLU_058638_1_0_1"/>
<dbReference type="InParanoid" id="Q86X24"/>
<dbReference type="OMA" id="IFQNKMV"/>
<dbReference type="OrthoDB" id="1928087at2759"/>
<dbReference type="PAN-GO" id="Q86X24">
    <property type="GO annotations" value="3 GO annotations based on evolutionary models"/>
</dbReference>
<dbReference type="PhylomeDB" id="Q86X24"/>
<dbReference type="TreeFam" id="TF313989"/>
<dbReference type="PathwayCommons" id="Q86X24"/>
<dbReference type="SignaLink" id="Q86X24"/>
<dbReference type="BioGRID-ORCS" id="84072">
    <property type="hits" value="18 hits in 1106 CRISPR screens"/>
</dbReference>
<dbReference type="ChiTaRS" id="HORMAD1">
    <property type="organism name" value="human"/>
</dbReference>
<dbReference type="GeneWiki" id="HORMAD1"/>
<dbReference type="GenomeRNAi" id="84072"/>
<dbReference type="Pharos" id="Q86X24">
    <property type="development level" value="Tbio"/>
</dbReference>
<dbReference type="PRO" id="PR:Q86X24"/>
<dbReference type="Proteomes" id="UP000005640">
    <property type="component" value="Chromosome 1"/>
</dbReference>
<dbReference type="RNAct" id="Q86X24">
    <property type="molecule type" value="protein"/>
</dbReference>
<dbReference type="Bgee" id="ENSG00000143452">
    <property type="expression patterns" value="Expressed in adult organism and 105 other cell types or tissues"/>
</dbReference>
<dbReference type="ExpressionAtlas" id="Q86X24">
    <property type="expression patterns" value="baseline and differential"/>
</dbReference>
<dbReference type="GO" id="GO:0005694">
    <property type="term" value="C:chromosome"/>
    <property type="evidence" value="ECO:0000250"/>
    <property type="project" value="UniProtKB"/>
</dbReference>
<dbReference type="GO" id="GO:0005634">
    <property type="term" value="C:nucleus"/>
    <property type="evidence" value="ECO:0000314"/>
    <property type="project" value="LIFEdb"/>
</dbReference>
<dbReference type="GO" id="GO:0000795">
    <property type="term" value="C:synaptonemal complex"/>
    <property type="evidence" value="ECO:0007669"/>
    <property type="project" value="Ensembl"/>
</dbReference>
<dbReference type="GO" id="GO:0001824">
    <property type="term" value="P:blastocyst development"/>
    <property type="evidence" value="ECO:0000250"/>
    <property type="project" value="UniProtKB"/>
</dbReference>
<dbReference type="GO" id="GO:0051321">
    <property type="term" value="P:meiotic cell cycle"/>
    <property type="evidence" value="ECO:0000250"/>
    <property type="project" value="UniProtKB"/>
</dbReference>
<dbReference type="GO" id="GO:0042138">
    <property type="term" value="P:meiotic DNA double-strand break formation"/>
    <property type="evidence" value="ECO:0000250"/>
    <property type="project" value="UniProtKB"/>
</dbReference>
<dbReference type="GO" id="GO:0051598">
    <property type="term" value="P:meiotic recombination checkpoint signaling"/>
    <property type="evidence" value="ECO:0000250"/>
    <property type="project" value="UniProtKB"/>
</dbReference>
<dbReference type="GO" id="GO:0051177">
    <property type="term" value="P:meiotic sister chromatid cohesion"/>
    <property type="evidence" value="ECO:0000250"/>
    <property type="project" value="UniProtKB"/>
</dbReference>
<dbReference type="GO" id="GO:0048477">
    <property type="term" value="P:oogenesis"/>
    <property type="evidence" value="ECO:0000250"/>
    <property type="project" value="UniProtKB"/>
</dbReference>
<dbReference type="GO" id="GO:0060629">
    <property type="term" value="P:regulation of homologous chromosome segregation"/>
    <property type="evidence" value="ECO:0000250"/>
    <property type="project" value="UniProtKB"/>
</dbReference>
<dbReference type="GO" id="GO:0007283">
    <property type="term" value="P:spermatogenesis"/>
    <property type="evidence" value="ECO:0000250"/>
    <property type="project" value="UniProtKB"/>
</dbReference>
<dbReference type="GO" id="GO:0007130">
    <property type="term" value="P:synaptonemal complex assembly"/>
    <property type="evidence" value="ECO:0000250"/>
    <property type="project" value="UniProtKB"/>
</dbReference>
<dbReference type="FunFam" id="3.30.900.10:FF:000006">
    <property type="entry name" value="HORMA domain-containing protein 1"/>
    <property type="match status" value="1"/>
</dbReference>
<dbReference type="Gene3D" id="3.30.900.10">
    <property type="entry name" value="HORMA domain"/>
    <property type="match status" value="1"/>
</dbReference>
<dbReference type="InterPro" id="IPR003511">
    <property type="entry name" value="HORMA_dom"/>
</dbReference>
<dbReference type="InterPro" id="IPR036570">
    <property type="entry name" value="HORMA_dom_sf"/>
</dbReference>
<dbReference type="InterPro" id="IPR051294">
    <property type="entry name" value="HORMA_MeioticProgression"/>
</dbReference>
<dbReference type="PANTHER" id="PTHR48225">
    <property type="entry name" value="HORMA DOMAIN-CONTAINING PROTEIN 1"/>
    <property type="match status" value="1"/>
</dbReference>
<dbReference type="PANTHER" id="PTHR48225:SF1">
    <property type="entry name" value="HORMA DOMAIN-CONTAINING PROTEIN 1"/>
    <property type="match status" value="1"/>
</dbReference>
<dbReference type="Pfam" id="PF02301">
    <property type="entry name" value="HORMA"/>
    <property type="match status" value="1"/>
</dbReference>
<dbReference type="SUPFAM" id="SSF56019">
    <property type="entry name" value="The spindle assembly checkpoint protein mad2"/>
    <property type="match status" value="1"/>
</dbReference>
<dbReference type="PROSITE" id="PS50815">
    <property type="entry name" value="HORMA"/>
    <property type="match status" value="1"/>
</dbReference>
<gene>
    <name evidence="12" type="primary">HORMAD1</name>
    <name evidence="8" type="synonym">NOHMA</name>
</gene>
<accession>Q86X24</accession>
<accession>A6NMK2</accession>
<accession>B3KUK1</accession>
<accession>Q4G114</accession>
<accession>Q5T5I3</accession>
<accession>Q5T5I4</accession>
<accession>Q5T5I5</accession>
<accession>Q6FIC1</accession>
<accession>Q9H0K8</accession>
<proteinExistence type="evidence at protein level"/>
<organism>
    <name type="scientific">Homo sapiens</name>
    <name type="common">Human</name>
    <dbReference type="NCBI Taxonomy" id="9606"/>
    <lineage>
        <taxon>Eukaryota</taxon>
        <taxon>Metazoa</taxon>
        <taxon>Chordata</taxon>
        <taxon>Craniata</taxon>
        <taxon>Vertebrata</taxon>
        <taxon>Euteleostomi</taxon>
        <taxon>Mammalia</taxon>
        <taxon>Eutheria</taxon>
        <taxon>Euarchontoglires</taxon>
        <taxon>Primates</taxon>
        <taxon>Haplorrhini</taxon>
        <taxon>Catarrhini</taxon>
        <taxon>Hominidae</taxon>
        <taxon>Homo</taxon>
    </lineage>
</organism>
<name>HORM1_HUMAN</name>
<sequence>MATAQLQRTPMSALVFPNKISTEHQSLVLVKRLLAVSVSCITYLRGIFPECAYGTRYLDDLCVKILREDKNCPGSTQLVKWMLGCYDALQKKYLRMVVLAVYTNPEDPQTISECYQFKFKYTNNGPLMDFISKNQSNESSMLSTDTKKASILLIRKIYILMQNLGPLPNDVCLTMKLFYYDEVTPPDYQPPGFKDGDCEGVIFEGEPMYLNVGEVSTPFHIFKVKVTTERERMENIDSTILSPKQIKTPFQKILRDKDVEDEQEHYTSDDLDIETKMEEQEKNPASSELEEPSLVCEEDEIMRSKESPDLSISHSQVEQLVNKTSELDMSESKTRSGKVFQNKMANGNQPVKSSKENRKRSQHESGRIVLHHFDSSSQESVPKRRKFSEPKEHI</sequence>
<reference key="1">
    <citation type="journal article" date="2004" name="Gene Expr. Patterns">
        <title>Restricted germ cell expression of a gene encoding a novel mammalian HORMA domain-containing protein.</title>
        <authorList>
            <person name="Pangas S.A."/>
            <person name="Yan W."/>
            <person name="Matzuk M.M."/>
            <person name="Rajkovic A."/>
        </authorList>
    </citation>
    <scope>NUCLEOTIDE SEQUENCE [MRNA] (ISOFORM 2)</scope>
</reference>
<reference key="2">
    <citation type="journal article" date="2001" name="Genome Res.">
        <title>Towards a catalog of human genes and proteins: sequencing and analysis of 500 novel complete protein coding human cDNAs.</title>
        <authorList>
            <person name="Wiemann S."/>
            <person name="Weil B."/>
            <person name="Wellenreuther R."/>
            <person name="Gassenhuber J."/>
            <person name="Glassl S."/>
            <person name="Ansorge W."/>
            <person name="Boecher M."/>
            <person name="Bloecker H."/>
            <person name="Bauersachs S."/>
            <person name="Blum H."/>
            <person name="Lauber J."/>
            <person name="Duesterhoeft A."/>
            <person name="Beyer A."/>
            <person name="Koehrer K."/>
            <person name="Strack N."/>
            <person name="Mewes H.-W."/>
            <person name="Ottenwaelder B."/>
            <person name="Obermaier B."/>
            <person name="Tampe J."/>
            <person name="Heubner D."/>
            <person name="Wambutt R."/>
            <person name="Korn B."/>
            <person name="Klein M."/>
            <person name="Poustka A."/>
        </authorList>
    </citation>
    <scope>NUCLEOTIDE SEQUENCE [LARGE SCALE MRNA] (ISOFORM 2)</scope>
    <source>
        <tissue>Testis</tissue>
    </source>
</reference>
<reference key="3">
    <citation type="submission" date="2004-06" db="EMBL/GenBank/DDBJ databases">
        <title>Cloning of human full open reading frames in Gateway(TM) system entry vector (pDONR201).</title>
        <authorList>
            <person name="Ebert L."/>
            <person name="Schick M."/>
            <person name="Neubert P."/>
            <person name="Schatten R."/>
            <person name="Henze S."/>
            <person name="Korn B."/>
        </authorList>
    </citation>
    <scope>NUCLEOTIDE SEQUENCE [LARGE SCALE MRNA] (ISOFORM 2)</scope>
</reference>
<reference key="4">
    <citation type="journal article" date="2004" name="Nat. Genet.">
        <title>Complete sequencing and characterization of 21,243 full-length human cDNAs.</title>
        <authorList>
            <person name="Ota T."/>
            <person name="Suzuki Y."/>
            <person name="Nishikawa T."/>
            <person name="Otsuki T."/>
            <person name="Sugiyama T."/>
            <person name="Irie R."/>
            <person name="Wakamatsu A."/>
            <person name="Hayashi K."/>
            <person name="Sato H."/>
            <person name="Nagai K."/>
            <person name="Kimura K."/>
            <person name="Makita H."/>
            <person name="Sekine M."/>
            <person name="Obayashi M."/>
            <person name="Nishi T."/>
            <person name="Shibahara T."/>
            <person name="Tanaka T."/>
            <person name="Ishii S."/>
            <person name="Yamamoto J."/>
            <person name="Saito K."/>
            <person name="Kawai Y."/>
            <person name="Isono Y."/>
            <person name="Nakamura Y."/>
            <person name="Nagahari K."/>
            <person name="Murakami K."/>
            <person name="Yasuda T."/>
            <person name="Iwayanagi T."/>
            <person name="Wagatsuma M."/>
            <person name="Shiratori A."/>
            <person name="Sudo H."/>
            <person name="Hosoiri T."/>
            <person name="Kaku Y."/>
            <person name="Kodaira H."/>
            <person name="Kondo H."/>
            <person name="Sugawara M."/>
            <person name="Takahashi M."/>
            <person name="Kanda K."/>
            <person name="Yokoi T."/>
            <person name="Furuya T."/>
            <person name="Kikkawa E."/>
            <person name="Omura Y."/>
            <person name="Abe K."/>
            <person name="Kamihara K."/>
            <person name="Katsuta N."/>
            <person name="Sato K."/>
            <person name="Tanikawa M."/>
            <person name="Yamazaki M."/>
            <person name="Ninomiya K."/>
            <person name="Ishibashi T."/>
            <person name="Yamashita H."/>
            <person name="Murakawa K."/>
            <person name="Fujimori K."/>
            <person name="Tanai H."/>
            <person name="Kimata M."/>
            <person name="Watanabe M."/>
            <person name="Hiraoka S."/>
            <person name="Chiba Y."/>
            <person name="Ishida S."/>
            <person name="Ono Y."/>
            <person name="Takiguchi S."/>
            <person name="Watanabe S."/>
            <person name="Yosida M."/>
            <person name="Hotuta T."/>
            <person name="Kusano J."/>
            <person name="Kanehori K."/>
            <person name="Takahashi-Fujii A."/>
            <person name="Hara H."/>
            <person name="Tanase T.-O."/>
            <person name="Nomura Y."/>
            <person name="Togiya S."/>
            <person name="Komai F."/>
            <person name="Hara R."/>
            <person name="Takeuchi K."/>
            <person name="Arita M."/>
            <person name="Imose N."/>
            <person name="Musashino K."/>
            <person name="Yuuki H."/>
            <person name="Oshima A."/>
            <person name="Sasaki N."/>
            <person name="Aotsuka S."/>
            <person name="Yoshikawa Y."/>
            <person name="Matsunawa H."/>
            <person name="Ichihara T."/>
            <person name="Shiohata N."/>
            <person name="Sano S."/>
            <person name="Moriya S."/>
            <person name="Momiyama H."/>
            <person name="Satoh N."/>
            <person name="Takami S."/>
            <person name="Terashima Y."/>
            <person name="Suzuki O."/>
            <person name="Nakagawa S."/>
            <person name="Senoh A."/>
            <person name="Mizoguchi H."/>
            <person name="Goto Y."/>
            <person name="Shimizu F."/>
            <person name="Wakebe H."/>
            <person name="Hishigaki H."/>
            <person name="Watanabe T."/>
            <person name="Sugiyama A."/>
            <person name="Takemoto M."/>
            <person name="Kawakami B."/>
            <person name="Yamazaki M."/>
            <person name="Watanabe K."/>
            <person name="Kumagai A."/>
            <person name="Itakura S."/>
            <person name="Fukuzumi Y."/>
            <person name="Fujimori Y."/>
            <person name="Komiyama M."/>
            <person name="Tashiro H."/>
            <person name="Tanigami A."/>
            <person name="Fujiwara T."/>
            <person name="Ono T."/>
            <person name="Yamada K."/>
            <person name="Fujii Y."/>
            <person name="Ozaki K."/>
            <person name="Hirao M."/>
            <person name="Ohmori Y."/>
            <person name="Kawabata A."/>
            <person name="Hikiji T."/>
            <person name="Kobatake N."/>
            <person name="Inagaki H."/>
            <person name="Ikema Y."/>
            <person name="Okamoto S."/>
            <person name="Okitani R."/>
            <person name="Kawakami T."/>
            <person name="Noguchi S."/>
            <person name="Itoh T."/>
            <person name="Shigeta K."/>
            <person name="Senba T."/>
            <person name="Matsumura K."/>
            <person name="Nakajima Y."/>
            <person name="Mizuno T."/>
            <person name="Morinaga M."/>
            <person name="Sasaki M."/>
            <person name="Togashi T."/>
            <person name="Oyama M."/>
            <person name="Hata H."/>
            <person name="Watanabe M."/>
            <person name="Komatsu T."/>
            <person name="Mizushima-Sugano J."/>
            <person name="Satoh T."/>
            <person name="Shirai Y."/>
            <person name="Takahashi Y."/>
            <person name="Nakagawa K."/>
            <person name="Okumura K."/>
            <person name="Nagase T."/>
            <person name="Nomura N."/>
            <person name="Kikuchi H."/>
            <person name="Masuho Y."/>
            <person name="Yamashita R."/>
            <person name="Nakai K."/>
            <person name="Yada T."/>
            <person name="Nakamura Y."/>
            <person name="Ohara O."/>
            <person name="Isogai T."/>
            <person name="Sugano S."/>
        </authorList>
    </citation>
    <scope>NUCLEOTIDE SEQUENCE [LARGE SCALE MRNA] (ISOFORM 1)</scope>
    <source>
        <tissue>Testis</tissue>
    </source>
</reference>
<reference key="5">
    <citation type="journal article" date="2006" name="Nature">
        <title>The DNA sequence and biological annotation of human chromosome 1.</title>
        <authorList>
            <person name="Gregory S.G."/>
            <person name="Barlow K.F."/>
            <person name="McLay K.E."/>
            <person name="Kaul R."/>
            <person name="Swarbreck D."/>
            <person name="Dunham A."/>
            <person name="Scott C.E."/>
            <person name="Howe K.L."/>
            <person name="Woodfine K."/>
            <person name="Spencer C.C.A."/>
            <person name="Jones M.C."/>
            <person name="Gillson C."/>
            <person name="Searle S."/>
            <person name="Zhou Y."/>
            <person name="Kokocinski F."/>
            <person name="McDonald L."/>
            <person name="Evans R."/>
            <person name="Phillips K."/>
            <person name="Atkinson A."/>
            <person name="Cooper R."/>
            <person name="Jones C."/>
            <person name="Hall R.E."/>
            <person name="Andrews T.D."/>
            <person name="Lloyd C."/>
            <person name="Ainscough R."/>
            <person name="Almeida J.P."/>
            <person name="Ambrose K.D."/>
            <person name="Anderson F."/>
            <person name="Andrew R.W."/>
            <person name="Ashwell R.I.S."/>
            <person name="Aubin K."/>
            <person name="Babbage A.K."/>
            <person name="Bagguley C.L."/>
            <person name="Bailey J."/>
            <person name="Beasley H."/>
            <person name="Bethel G."/>
            <person name="Bird C.P."/>
            <person name="Bray-Allen S."/>
            <person name="Brown J.Y."/>
            <person name="Brown A.J."/>
            <person name="Buckley D."/>
            <person name="Burton J."/>
            <person name="Bye J."/>
            <person name="Carder C."/>
            <person name="Chapman J.C."/>
            <person name="Clark S.Y."/>
            <person name="Clarke G."/>
            <person name="Clee C."/>
            <person name="Cobley V."/>
            <person name="Collier R.E."/>
            <person name="Corby N."/>
            <person name="Coville G.J."/>
            <person name="Davies J."/>
            <person name="Deadman R."/>
            <person name="Dunn M."/>
            <person name="Earthrowl M."/>
            <person name="Ellington A.G."/>
            <person name="Errington H."/>
            <person name="Frankish A."/>
            <person name="Frankland J."/>
            <person name="French L."/>
            <person name="Garner P."/>
            <person name="Garnett J."/>
            <person name="Gay L."/>
            <person name="Ghori M.R.J."/>
            <person name="Gibson R."/>
            <person name="Gilby L.M."/>
            <person name="Gillett W."/>
            <person name="Glithero R.J."/>
            <person name="Grafham D.V."/>
            <person name="Griffiths C."/>
            <person name="Griffiths-Jones S."/>
            <person name="Grocock R."/>
            <person name="Hammond S."/>
            <person name="Harrison E.S.I."/>
            <person name="Hart E."/>
            <person name="Haugen E."/>
            <person name="Heath P.D."/>
            <person name="Holmes S."/>
            <person name="Holt K."/>
            <person name="Howden P.J."/>
            <person name="Hunt A.R."/>
            <person name="Hunt S.E."/>
            <person name="Hunter G."/>
            <person name="Isherwood J."/>
            <person name="James R."/>
            <person name="Johnson C."/>
            <person name="Johnson D."/>
            <person name="Joy A."/>
            <person name="Kay M."/>
            <person name="Kershaw J.K."/>
            <person name="Kibukawa M."/>
            <person name="Kimberley A.M."/>
            <person name="King A."/>
            <person name="Knights A.J."/>
            <person name="Lad H."/>
            <person name="Laird G."/>
            <person name="Lawlor S."/>
            <person name="Leongamornlert D.A."/>
            <person name="Lloyd D.M."/>
            <person name="Loveland J."/>
            <person name="Lovell J."/>
            <person name="Lush M.J."/>
            <person name="Lyne R."/>
            <person name="Martin S."/>
            <person name="Mashreghi-Mohammadi M."/>
            <person name="Matthews L."/>
            <person name="Matthews N.S.W."/>
            <person name="McLaren S."/>
            <person name="Milne S."/>
            <person name="Mistry S."/>
            <person name="Moore M.J.F."/>
            <person name="Nickerson T."/>
            <person name="O'Dell C.N."/>
            <person name="Oliver K."/>
            <person name="Palmeiri A."/>
            <person name="Palmer S.A."/>
            <person name="Parker A."/>
            <person name="Patel D."/>
            <person name="Pearce A.V."/>
            <person name="Peck A.I."/>
            <person name="Pelan S."/>
            <person name="Phelps K."/>
            <person name="Phillimore B.J."/>
            <person name="Plumb R."/>
            <person name="Rajan J."/>
            <person name="Raymond C."/>
            <person name="Rouse G."/>
            <person name="Saenphimmachak C."/>
            <person name="Sehra H.K."/>
            <person name="Sheridan E."/>
            <person name="Shownkeen R."/>
            <person name="Sims S."/>
            <person name="Skuce C.D."/>
            <person name="Smith M."/>
            <person name="Steward C."/>
            <person name="Subramanian S."/>
            <person name="Sycamore N."/>
            <person name="Tracey A."/>
            <person name="Tromans A."/>
            <person name="Van Helmond Z."/>
            <person name="Wall M."/>
            <person name="Wallis J.M."/>
            <person name="White S."/>
            <person name="Whitehead S.L."/>
            <person name="Wilkinson J.E."/>
            <person name="Willey D.L."/>
            <person name="Williams H."/>
            <person name="Wilming L."/>
            <person name="Wray P.W."/>
            <person name="Wu Z."/>
            <person name="Coulson A."/>
            <person name="Vaudin M."/>
            <person name="Sulston J.E."/>
            <person name="Durbin R.M."/>
            <person name="Hubbard T."/>
            <person name="Wooster R."/>
            <person name="Dunham I."/>
            <person name="Carter N.P."/>
            <person name="McVean G."/>
            <person name="Ross M.T."/>
            <person name="Harrow J."/>
            <person name="Olson M.V."/>
            <person name="Beck S."/>
            <person name="Rogers J."/>
            <person name="Bentley D.R."/>
        </authorList>
    </citation>
    <scope>NUCLEOTIDE SEQUENCE [LARGE SCALE GENOMIC DNA]</scope>
</reference>
<reference key="6">
    <citation type="submission" date="2005-09" db="EMBL/GenBank/DDBJ databases">
        <authorList>
            <person name="Mural R.J."/>
            <person name="Istrail S."/>
            <person name="Sutton G.G."/>
            <person name="Florea L."/>
            <person name="Halpern A.L."/>
            <person name="Mobarry C.M."/>
            <person name="Lippert R."/>
            <person name="Walenz B."/>
            <person name="Shatkay H."/>
            <person name="Dew I."/>
            <person name="Miller J.R."/>
            <person name="Flanigan M.J."/>
            <person name="Edwards N.J."/>
            <person name="Bolanos R."/>
            <person name="Fasulo D."/>
            <person name="Halldorsson B.V."/>
            <person name="Hannenhalli S."/>
            <person name="Turner R."/>
            <person name="Yooseph S."/>
            <person name="Lu F."/>
            <person name="Nusskern D.R."/>
            <person name="Shue B.C."/>
            <person name="Zheng X.H."/>
            <person name="Zhong F."/>
            <person name="Delcher A.L."/>
            <person name="Huson D.H."/>
            <person name="Kravitz S.A."/>
            <person name="Mouchard L."/>
            <person name="Reinert K."/>
            <person name="Remington K.A."/>
            <person name="Clark A.G."/>
            <person name="Waterman M.S."/>
            <person name="Eichler E.E."/>
            <person name="Adams M.D."/>
            <person name="Hunkapiller M.W."/>
            <person name="Myers E.W."/>
            <person name="Venter J.C."/>
        </authorList>
    </citation>
    <scope>NUCLEOTIDE SEQUENCE [LARGE SCALE GENOMIC DNA]</scope>
</reference>
<reference key="7">
    <citation type="journal article" date="2004" name="Genome Res.">
        <title>The status, quality, and expansion of the NIH full-length cDNA project: the Mammalian Gene Collection (MGC).</title>
        <authorList>
            <consortium name="The MGC Project Team"/>
        </authorList>
    </citation>
    <scope>NUCLEOTIDE SEQUENCE [LARGE SCALE MRNA] (ISOFORMS 1 AND 4)</scope>
    <scope>VARIANT ILE-267</scope>
    <source>
        <tissue>Testis</tissue>
    </source>
</reference>
<reference key="8">
    <citation type="journal article" date="2005" name="Cancer Immun.">
        <title>Identification of CT46/HORMAD1, an immunogenic cancer/testis antigen encoding a putative meiosis-related protein.</title>
        <authorList>
            <person name="Chen Y.-T."/>
            <person name="Venditti C.A."/>
            <person name="Theiler G."/>
            <person name="Stevenson B.J."/>
            <person name="Iseli C."/>
            <person name="Gure A.O."/>
            <person name="Jongeneel C.V."/>
            <person name="Old L.J."/>
            <person name="Simpson A.J.G."/>
        </authorList>
    </citation>
    <scope>IDENTIFICATION (ISOFORMS 1 AND 3)</scope>
    <scope>TISSUE SPECIFICITY</scope>
</reference>
<keyword id="KW-0002">3D-structure</keyword>
<keyword id="KW-0025">Alternative splicing</keyword>
<keyword id="KW-0158">Chromosome</keyword>
<keyword id="KW-0221">Differentiation</keyword>
<keyword id="KW-0469">Meiosis</keyword>
<keyword id="KW-0539">Nucleus</keyword>
<keyword id="KW-0896">Oogenesis</keyword>
<keyword id="KW-0597">Phosphoprotein</keyword>
<keyword id="KW-1267">Proteomics identification</keyword>
<keyword id="KW-1185">Reference proteome</keyword>
<keyword id="KW-0744">Spermatogenesis</keyword>
<evidence type="ECO:0000250" key="1">
    <source>
        <dbReference type="UniProtKB" id="Q9D5T7"/>
    </source>
</evidence>
<evidence type="ECO:0000255" key="2">
    <source>
        <dbReference type="PROSITE-ProRule" id="PRU00109"/>
    </source>
</evidence>
<evidence type="ECO:0000256" key="3">
    <source>
        <dbReference type="SAM" id="MobiDB-lite"/>
    </source>
</evidence>
<evidence type="ECO:0000269" key="4">
    <source>
    </source>
</evidence>
<evidence type="ECO:0000269" key="5">
    <source>
    </source>
</evidence>
<evidence type="ECO:0000303" key="6">
    <source>
    </source>
</evidence>
<evidence type="ECO:0000303" key="7">
    <source>
    </source>
</evidence>
<evidence type="ECO:0000303" key="8">
    <source>
    </source>
</evidence>
<evidence type="ECO:0000303" key="9">
    <source>
    </source>
</evidence>
<evidence type="ECO:0000303" key="10">
    <source ref="3"/>
</evidence>
<evidence type="ECO:0000305" key="11"/>
<evidence type="ECO:0000312" key="12">
    <source>
        <dbReference type="HGNC" id="HGNC:25245"/>
    </source>
</evidence>
<evidence type="ECO:0007829" key="13">
    <source>
        <dbReference type="PDB" id="8J69"/>
    </source>
</evidence>
<protein>
    <recommendedName>
        <fullName evidence="12">HORMA domain-containing protein 1</fullName>
    </recommendedName>
    <alternativeName>
        <fullName evidence="9">Cancer/testis antigen 46</fullName>
        <shortName evidence="9">CT46</shortName>
    </alternativeName>
    <alternativeName>
        <fullName evidence="8">Newborn ovary HORMA protein</fullName>
    </alternativeName>
</protein>